<keyword id="KW-0044">Antibiotic</keyword>
<keyword id="KW-0929">Antimicrobial</keyword>
<keyword id="KW-1221">Calcium-activated potassium channel impairing toxin</keyword>
<keyword id="KW-0903">Direct protein sequencing</keyword>
<keyword id="KW-1015">Disulfide bond</keyword>
<keyword id="KW-0872">Ion channel impairing toxin</keyword>
<keyword id="KW-0528">Neurotoxin</keyword>
<keyword id="KW-0632">Potassium channel impairing toxin</keyword>
<keyword id="KW-0964">Secreted</keyword>
<keyword id="KW-0732">Signal</keyword>
<keyword id="KW-0800">Toxin</keyword>
<keyword id="KW-0738">Voltage-gated sodium channel impairing toxin</keyword>
<accession>P86406</accession>
<accession>E4VP47</accession>
<accession>R4H619</accession>
<protein>
    <recommendedName>
        <fullName evidence="5">MeuNaTxbeta-1</fullName>
        <shortName evidence="5">MTbeta-1</shortName>
    </recommendedName>
    <alternativeName>
        <fullName evidence="10 11 12 13">Sodium channel neurotoxin MeuNaTxalpha-15</fullName>
    </alternativeName>
    <alternativeName>
        <fullName evidence="6">Sodium channel neurotoxin MeuNaTxalpha-6</fullName>
    </alternativeName>
</protein>
<sequence>MMKIIIFLIVSSLVLIGVKTDNGYLLDKYTGCKVWCVINNESCNSECKIRRGNYGYCYFWKLACYCEGAPKSELWHYETNKCNGRM</sequence>
<organism>
    <name type="scientific">Mesobuthus eupeus</name>
    <name type="common">Lesser Asian scorpion</name>
    <name type="synonym">Buthus eupeus</name>
    <dbReference type="NCBI Taxonomy" id="34648"/>
    <lineage>
        <taxon>Eukaryota</taxon>
        <taxon>Metazoa</taxon>
        <taxon>Ecdysozoa</taxon>
        <taxon>Arthropoda</taxon>
        <taxon>Chelicerata</taxon>
        <taxon>Arachnida</taxon>
        <taxon>Scorpiones</taxon>
        <taxon>Buthida</taxon>
        <taxon>Buthoidea</taxon>
        <taxon>Buthidae</taxon>
        <taxon>Mesobuthus</taxon>
    </lineage>
</organism>
<proteinExistence type="evidence at protein level"/>
<reference key="1">
    <citation type="submission" date="2009-11" db="EMBL/GenBank/DDBJ databases">
        <title>Molecular characterization of sodium channel toxins from the scorpion Mesobuthus eupeus.</title>
        <authorList>
            <person name="Zhu S.Y."/>
            <person name="Gao B."/>
        </authorList>
    </citation>
    <scope>NUCLEOTIDE SEQUENCE [MRNA]</scope>
    <source>
        <tissue>Venom gland</tissue>
    </source>
</reference>
<reference key="2">
    <citation type="submission" date="2009-11" db="UniProtKB">
        <title>Characterization of a sodium channel toxin from the scorpion Mesobuthus eupeus venom.</title>
        <authorList>
            <person name="Zhu S.Y."/>
            <person name="Gao B."/>
        </authorList>
    </citation>
    <scope>PROTEIN SEQUENCE OF 21-86</scope>
    <scope>FUNCTION</scope>
    <scope>SUBCELLULAR LOCATION</scope>
    <scope>MASS SPECTROMETRY</scope>
    <source>
        <tissue>Venom</tissue>
    </source>
</reference>
<reference key="3">
    <citation type="journal article" date="2018" name="Amino Acids">
        <title>Meucin-49, a multifunctional scorpion venom peptide with bactericidal synergy with neurotoxins.</title>
        <authorList>
            <person name="Gao B."/>
            <person name="Dalziel J."/>
            <person name="Tanzi S."/>
            <person name="Zhu S."/>
        </authorList>
    </citation>
    <scope>NUCLEOTIDE SEQUENCE [MRNA] OF 21-86</scope>
    <scope>PROTEIN SEQUENCE OF 21-40</scope>
    <scope>FUNCTION</scope>
    <scope>MASS SPECTROMETRY</scope>
    <scope>SUBCELLULAR LOCATION</scope>
    <scope>3D-STRUCTURE MODELING IN COMPLEX WITH KCA1.1/KCNMA1/BK CHANNEL</scope>
    <source>
        <tissue>Venom</tissue>
        <tissue>Venom gland</tissue>
    </source>
</reference>
<comment type="function">
    <text evidence="3 4">Inhibits sodium channels (Nav) (Ref.2). Also moderately inhibits human calcium-activated potassium channel KCa1.1/KCNMA1/BK (41.9% decrease at 2 uM toxin concentration) (PubMed:29770866). Shows moderate antimicrobial activity against both Gram-positive and -negative bacteria (PubMed:29770866, Ref.2).</text>
</comment>
<comment type="subcellular location">
    <subcellularLocation>
        <location evidence="3 4">Secreted</location>
    </subcellularLocation>
</comment>
<comment type="tissue specificity">
    <text evidence="8 9">Expressed by the venom gland.</text>
</comment>
<comment type="domain">
    <text evidence="7">Has the structural arrangement of an alpha-helix connected to antiparallel beta-sheets by disulfide bonds (CS-alpha/beta).</text>
</comment>
<comment type="mass spectrometry"/>
<comment type="mass spectrometry"/>
<comment type="similarity">
    <text evidence="7">Belongs to the long (4 C-C) scorpion toxin superfamily. Sodium channel inhibitor family.</text>
</comment>
<comment type="caution">
    <text evidence="7">Zhu and colleagues published information on another 'Neurotoxin MeuNaTx-6' in 2012 (AC E7CZY9), whose sequence highly differs from the one presented here.</text>
</comment>
<name>SCX1_MESEU</name>
<dbReference type="EMBL" id="EF445089">
    <property type="protein sequence ID" value="ABR21064.1"/>
    <property type="molecule type" value="mRNA"/>
</dbReference>
<dbReference type="EMBL" id="GU187954">
    <property type="protein sequence ID" value="ADT64277.1"/>
    <property type="molecule type" value="mRNA"/>
</dbReference>
<dbReference type="EMBL" id="GU187957">
    <property type="protein sequence ID" value="ADT64280.1"/>
    <property type="molecule type" value="mRNA"/>
</dbReference>
<dbReference type="EMBL" id="GU187955">
    <property type="protein sequence ID" value="ADT64278.1"/>
    <property type="molecule type" value="mRNA"/>
</dbReference>
<dbReference type="EMBL" id="GU187956">
    <property type="protein sequence ID" value="ADT64279.1"/>
    <property type="molecule type" value="mRNA"/>
</dbReference>
<dbReference type="SMR" id="P86406"/>
<dbReference type="GO" id="GO:0005576">
    <property type="term" value="C:extracellular region"/>
    <property type="evidence" value="ECO:0007669"/>
    <property type="project" value="UniProtKB-SubCell"/>
</dbReference>
<dbReference type="GO" id="GO:0015459">
    <property type="term" value="F:potassium channel regulator activity"/>
    <property type="evidence" value="ECO:0007669"/>
    <property type="project" value="UniProtKB-KW"/>
</dbReference>
<dbReference type="GO" id="GO:0019871">
    <property type="term" value="F:sodium channel inhibitor activity"/>
    <property type="evidence" value="ECO:0007669"/>
    <property type="project" value="InterPro"/>
</dbReference>
<dbReference type="GO" id="GO:0090729">
    <property type="term" value="F:toxin activity"/>
    <property type="evidence" value="ECO:0007669"/>
    <property type="project" value="UniProtKB-KW"/>
</dbReference>
<dbReference type="GO" id="GO:0042742">
    <property type="term" value="P:defense response to bacterium"/>
    <property type="evidence" value="ECO:0007669"/>
    <property type="project" value="UniProtKB-KW"/>
</dbReference>
<dbReference type="CDD" id="cd23106">
    <property type="entry name" value="neurotoxins_LC_scorpion"/>
    <property type="match status" value="1"/>
</dbReference>
<dbReference type="Gene3D" id="3.30.30.10">
    <property type="entry name" value="Knottin, scorpion toxin-like"/>
    <property type="match status" value="1"/>
</dbReference>
<dbReference type="InterPro" id="IPR044062">
    <property type="entry name" value="LCN-type_CS_alpha_beta_dom"/>
</dbReference>
<dbReference type="InterPro" id="IPR003614">
    <property type="entry name" value="Scorpion_toxin-like"/>
</dbReference>
<dbReference type="InterPro" id="IPR036574">
    <property type="entry name" value="Scorpion_toxin-like_sf"/>
</dbReference>
<dbReference type="InterPro" id="IPR018218">
    <property type="entry name" value="Scorpion_toxinL"/>
</dbReference>
<dbReference type="InterPro" id="IPR002061">
    <property type="entry name" value="Scorpion_toxinL/defensin"/>
</dbReference>
<dbReference type="Pfam" id="PF00537">
    <property type="entry name" value="Toxin_3"/>
    <property type="match status" value="1"/>
</dbReference>
<dbReference type="PRINTS" id="PR00285">
    <property type="entry name" value="SCORPNTOXIN"/>
</dbReference>
<dbReference type="SMART" id="SM00505">
    <property type="entry name" value="Knot1"/>
    <property type="match status" value="1"/>
</dbReference>
<dbReference type="SUPFAM" id="SSF57095">
    <property type="entry name" value="Scorpion toxin-like"/>
    <property type="match status" value="1"/>
</dbReference>
<dbReference type="PROSITE" id="PS51863">
    <property type="entry name" value="LCN_CSAB"/>
    <property type="match status" value="1"/>
</dbReference>
<evidence type="ECO:0000250" key="1">
    <source>
        <dbReference type="UniProtKB" id="P86405"/>
    </source>
</evidence>
<evidence type="ECO:0000255" key="2">
    <source>
        <dbReference type="PROSITE-ProRule" id="PRU01210"/>
    </source>
</evidence>
<evidence type="ECO:0000269" key="3">
    <source>
    </source>
</evidence>
<evidence type="ECO:0000269" key="4">
    <source ref="2"/>
</evidence>
<evidence type="ECO:0000303" key="5">
    <source>
    </source>
</evidence>
<evidence type="ECO:0000303" key="6">
    <source ref="2"/>
</evidence>
<evidence type="ECO:0000305" key="7"/>
<evidence type="ECO:0000305" key="8">
    <source>
    </source>
</evidence>
<evidence type="ECO:0000305" key="9">
    <source ref="2"/>
</evidence>
<evidence type="ECO:0000312" key="10">
    <source>
        <dbReference type="EMBL" id="ADT64277.1"/>
    </source>
</evidence>
<evidence type="ECO:0000312" key="11">
    <source>
        <dbReference type="EMBL" id="ADT64278.1"/>
    </source>
</evidence>
<evidence type="ECO:0000312" key="12">
    <source>
        <dbReference type="EMBL" id="ADT64279.1"/>
    </source>
</evidence>
<evidence type="ECO:0000312" key="13">
    <source>
        <dbReference type="EMBL" id="ADT64280.1"/>
    </source>
</evidence>
<feature type="signal peptide" evidence="4">
    <location>
        <begin position="1"/>
        <end position="20"/>
    </location>
</feature>
<feature type="chain" id="PRO_0000401123" description="MeuNaTxbeta-1" evidence="4">
    <location>
        <begin position="21"/>
        <end position="86"/>
    </location>
</feature>
<feature type="domain" description="LCN-type CS-alpha/beta" evidence="2">
    <location>
        <begin position="21"/>
        <end position="83"/>
    </location>
</feature>
<feature type="site" description="Located on the interface between the toxin and the human BK channel" evidence="8">
    <location>
        <position position="48"/>
    </location>
</feature>
<feature type="site" description="Located on the interface between the toxin and the human BK channel" evidence="8">
    <location>
        <position position="50"/>
    </location>
</feature>
<feature type="site" description="Located on the interface between the toxin and the human BK channel" evidence="8">
    <location>
        <position position="51"/>
    </location>
</feature>
<feature type="disulfide bond" evidence="1">
    <location>
        <begin position="32"/>
        <end position="82"/>
    </location>
</feature>
<feature type="disulfide bond" evidence="1">
    <location>
        <begin position="36"/>
        <end position="57"/>
    </location>
</feature>
<feature type="disulfide bond" evidence="1">
    <location>
        <begin position="43"/>
        <end position="64"/>
    </location>
</feature>
<feature type="disulfide bond" evidence="1">
    <location>
        <begin position="47"/>
        <end position="66"/>
    </location>
</feature>